<name>SYE1_THESQ</name>
<evidence type="ECO:0000255" key="1">
    <source>
        <dbReference type="HAMAP-Rule" id="MF_00022"/>
    </source>
</evidence>
<feature type="chain" id="PRO_0000367792" description="Glutamate--tRNA ligase 1">
    <location>
        <begin position="1"/>
        <end position="464"/>
    </location>
</feature>
<feature type="short sequence motif" description="'HIGH' region" evidence="1">
    <location>
        <begin position="8"/>
        <end position="18"/>
    </location>
</feature>
<feature type="short sequence motif" description="'KMSKS' region" evidence="1">
    <location>
        <begin position="231"/>
        <end position="235"/>
    </location>
</feature>
<feature type="binding site" evidence="1">
    <location>
        <position position="234"/>
    </location>
    <ligand>
        <name>ATP</name>
        <dbReference type="ChEBI" id="CHEBI:30616"/>
    </ligand>
</feature>
<reference key="1">
    <citation type="journal article" date="2011" name="J. Bacteriol.">
        <title>Genome sequence of Thermotoga sp. strain RQ2, a hyperthermophilic bacterium isolated from a geothermally heated region of the seafloor near Ribeira Quente, the Azores.</title>
        <authorList>
            <person name="Swithers K.S."/>
            <person name="DiPippo J.L."/>
            <person name="Bruce D.C."/>
            <person name="Detter C."/>
            <person name="Tapia R."/>
            <person name="Han S."/>
            <person name="Saunders E."/>
            <person name="Goodwin L.A."/>
            <person name="Han J."/>
            <person name="Woyke T."/>
            <person name="Pitluck S."/>
            <person name="Pennacchio L."/>
            <person name="Nolan M."/>
            <person name="Mikhailova N."/>
            <person name="Lykidis A."/>
            <person name="Land M.L."/>
            <person name="Brettin T."/>
            <person name="Stetter K.O."/>
            <person name="Nelson K.E."/>
            <person name="Gogarten J.P."/>
            <person name="Noll K.M."/>
        </authorList>
    </citation>
    <scope>NUCLEOTIDE SEQUENCE [LARGE SCALE GENOMIC DNA]</scope>
    <source>
        <strain>RQ2</strain>
    </source>
</reference>
<gene>
    <name evidence="1" type="primary">gltX1</name>
    <name type="ordered locus">TRQ2_0944</name>
</gene>
<dbReference type="EC" id="6.1.1.17" evidence="1"/>
<dbReference type="EMBL" id="CP000969">
    <property type="protein sequence ID" value="ACB09295.1"/>
    <property type="molecule type" value="Genomic_DNA"/>
</dbReference>
<dbReference type="RefSeq" id="WP_012310833.1">
    <property type="nucleotide sequence ID" value="NC_010483.1"/>
</dbReference>
<dbReference type="SMR" id="B1LAE7"/>
<dbReference type="KEGG" id="trq:TRQ2_0944"/>
<dbReference type="HOGENOM" id="CLU_015768_6_3_0"/>
<dbReference type="Proteomes" id="UP000001687">
    <property type="component" value="Chromosome"/>
</dbReference>
<dbReference type="GO" id="GO:0005829">
    <property type="term" value="C:cytosol"/>
    <property type="evidence" value="ECO:0007669"/>
    <property type="project" value="TreeGrafter"/>
</dbReference>
<dbReference type="GO" id="GO:0005524">
    <property type="term" value="F:ATP binding"/>
    <property type="evidence" value="ECO:0007669"/>
    <property type="project" value="UniProtKB-UniRule"/>
</dbReference>
<dbReference type="GO" id="GO:0004818">
    <property type="term" value="F:glutamate-tRNA ligase activity"/>
    <property type="evidence" value="ECO:0007669"/>
    <property type="project" value="UniProtKB-UniRule"/>
</dbReference>
<dbReference type="GO" id="GO:0000049">
    <property type="term" value="F:tRNA binding"/>
    <property type="evidence" value="ECO:0007669"/>
    <property type="project" value="InterPro"/>
</dbReference>
<dbReference type="GO" id="GO:0008270">
    <property type="term" value="F:zinc ion binding"/>
    <property type="evidence" value="ECO:0007669"/>
    <property type="project" value="InterPro"/>
</dbReference>
<dbReference type="GO" id="GO:0006424">
    <property type="term" value="P:glutamyl-tRNA aminoacylation"/>
    <property type="evidence" value="ECO:0007669"/>
    <property type="project" value="UniProtKB-UniRule"/>
</dbReference>
<dbReference type="CDD" id="cd00808">
    <property type="entry name" value="GluRS_core"/>
    <property type="match status" value="1"/>
</dbReference>
<dbReference type="FunFam" id="1.10.1160.10:FF:000003">
    <property type="entry name" value="Glutamate--tRNA ligase 2"/>
    <property type="match status" value="1"/>
</dbReference>
<dbReference type="Gene3D" id="1.10.10.350">
    <property type="match status" value="1"/>
</dbReference>
<dbReference type="Gene3D" id="1.10.8.70">
    <property type="entry name" value="Glutamate-tRNA synthetase, class I, anticodon-binding domain 1"/>
    <property type="match status" value="1"/>
</dbReference>
<dbReference type="Gene3D" id="1.10.1160.10">
    <property type="entry name" value="Glutamyl-trna Synthetase, Domain 2"/>
    <property type="match status" value="1"/>
</dbReference>
<dbReference type="Gene3D" id="3.90.800.10">
    <property type="entry name" value="Glutamyl-tRNA Synthetase, Domain 3"/>
    <property type="match status" value="1"/>
</dbReference>
<dbReference type="Gene3D" id="3.40.50.620">
    <property type="entry name" value="HUPs"/>
    <property type="match status" value="1"/>
</dbReference>
<dbReference type="HAMAP" id="MF_00022">
    <property type="entry name" value="Glu_tRNA_synth_type1"/>
    <property type="match status" value="1"/>
</dbReference>
<dbReference type="InterPro" id="IPR045462">
    <property type="entry name" value="aa-tRNA-synth_I_cd-bd"/>
</dbReference>
<dbReference type="InterPro" id="IPR020751">
    <property type="entry name" value="aa-tRNA-synth_I_codon-bd_sub2"/>
</dbReference>
<dbReference type="InterPro" id="IPR001412">
    <property type="entry name" value="aa-tRNA-synth_I_CS"/>
</dbReference>
<dbReference type="InterPro" id="IPR008925">
    <property type="entry name" value="aa_tRNA-synth_I_cd-bd_sf"/>
</dbReference>
<dbReference type="InterPro" id="IPR004527">
    <property type="entry name" value="Glu-tRNA-ligase_bac/mito"/>
</dbReference>
<dbReference type="InterPro" id="IPR020752">
    <property type="entry name" value="Glu-tRNA-synth_I_codon-bd_sub1"/>
</dbReference>
<dbReference type="InterPro" id="IPR000924">
    <property type="entry name" value="Glu/Gln-tRNA-synth"/>
</dbReference>
<dbReference type="InterPro" id="IPR020058">
    <property type="entry name" value="Glu/Gln-tRNA-synth_Ib_cat-dom"/>
</dbReference>
<dbReference type="InterPro" id="IPR020061">
    <property type="entry name" value="Glu_tRNA_lig_a-bdl"/>
</dbReference>
<dbReference type="InterPro" id="IPR049940">
    <property type="entry name" value="GluQ/Sye"/>
</dbReference>
<dbReference type="InterPro" id="IPR033910">
    <property type="entry name" value="GluRS_core"/>
</dbReference>
<dbReference type="InterPro" id="IPR014729">
    <property type="entry name" value="Rossmann-like_a/b/a_fold"/>
</dbReference>
<dbReference type="NCBIfam" id="TIGR00464">
    <property type="entry name" value="gltX_bact"/>
    <property type="match status" value="1"/>
</dbReference>
<dbReference type="PANTHER" id="PTHR43311">
    <property type="entry name" value="GLUTAMATE--TRNA LIGASE"/>
    <property type="match status" value="1"/>
</dbReference>
<dbReference type="PANTHER" id="PTHR43311:SF2">
    <property type="entry name" value="GLUTAMATE--TRNA LIGASE, MITOCHONDRIAL-RELATED"/>
    <property type="match status" value="1"/>
</dbReference>
<dbReference type="Pfam" id="PF19269">
    <property type="entry name" value="Anticodon_2"/>
    <property type="match status" value="1"/>
</dbReference>
<dbReference type="Pfam" id="PF00749">
    <property type="entry name" value="tRNA-synt_1c"/>
    <property type="match status" value="1"/>
</dbReference>
<dbReference type="PRINTS" id="PR00987">
    <property type="entry name" value="TRNASYNTHGLU"/>
</dbReference>
<dbReference type="SUPFAM" id="SSF48163">
    <property type="entry name" value="An anticodon-binding domain of class I aminoacyl-tRNA synthetases"/>
    <property type="match status" value="1"/>
</dbReference>
<dbReference type="SUPFAM" id="SSF52374">
    <property type="entry name" value="Nucleotidylyl transferase"/>
    <property type="match status" value="1"/>
</dbReference>
<dbReference type="PROSITE" id="PS00178">
    <property type="entry name" value="AA_TRNA_LIGASE_I"/>
    <property type="match status" value="1"/>
</dbReference>
<comment type="function">
    <text evidence="1">Catalyzes the attachment of glutamate to tRNA(Glu) in a two-step reaction: glutamate is first activated by ATP to form Glu-AMP and then transferred to the acceptor end of tRNA(Glu).</text>
</comment>
<comment type="catalytic activity">
    <reaction evidence="1">
        <text>tRNA(Glu) + L-glutamate + ATP = L-glutamyl-tRNA(Glu) + AMP + diphosphate</text>
        <dbReference type="Rhea" id="RHEA:23540"/>
        <dbReference type="Rhea" id="RHEA-COMP:9663"/>
        <dbReference type="Rhea" id="RHEA-COMP:9680"/>
        <dbReference type="ChEBI" id="CHEBI:29985"/>
        <dbReference type="ChEBI" id="CHEBI:30616"/>
        <dbReference type="ChEBI" id="CHEBI:33019"/>
        <dbReference type="ChEBI" id="CHEBI:78442"/>
        <dbReference type="ChEBI" id="CHEBI:78520"/>
        <dbReference type="ChEBI" id="CHEBI:456215"/>
        <dbReference type="EC" id="6.1.1.17"/>
    </reaction>
</comment>
<comment type="subunit">
    <text evidence="1">Monomer.</text>
</comment>
<comment type="subcellular location">
    <subcellularLocation>
        <location evidence="1">Cytoplasm</location>
    </subcellularLocation>
</comment>
<comment type="similarity">
    <text evidence="1">Belongs to the class-I aminoacyl-tRNA synthetase family. Glutamate--tRNA ligase type 1 subfamily.</text>
</comment>
<proteinExistence type="inferred from homology"/>
<protein>
    <recommendedName>
        <fullName evidence="1">Glutamate--tRNA ligase 1</fullName>
        <ecNumber evidence="1">6.1.1.17</ecNumber>
    </recommendedName>
    <alternativeName>
        <fullName evidence="1">Glutamyl-tRNA synthetase 1</fullName>
        <shortName evidence="1">GluRS 1</shortName>
    </alternativeName>
</protein>
<sequence length="464" mass="54651">MVRVRFAPSPTGHLHVGGARTALFNWMFARKEGGKFILRIEDTDTERSSREYEQQILESLRWCGLDWDEGPDIGGDFGPYRQSERLEIYREYAKKLVEDKRAYYVVYDKEDPSKELFTTYDYPHEYKEKGHPVTIKFKVLPGKTSFEDLLKGYMEFDNSTLEDFIIMKSNGFPTYNFAVVVDDHLMRISHVFRGEDHLSNTPKQLMIYEAFGWEAPVFMHIPLILGPDRTPLSKRHGATSVEHFRREGILSRALMNYLALLGWRVEGDEIFTIEEKLQSFDPKDISNKGVIFDYQKLEWVNGKHMRRIDLEDLKREFIEWAKYVGREIPSLNESYFTEALRICREKVNTLSQLYDIMYPFMSDDYEYEKDYVEKFLKREEAERVLEEAKKAFKDLNSWNMEEIEKTLRDLSEKGLASKKVVFQLIRGAVTGKLVTPGLFETIEVLGKERTLKRLERTLQFLKKT</sequence>
<keyword id="KW-0030">Aminoacyl-tRNA synthetase</keyword>
<keyword id="KW-0067">ATP-binding</keyword>
<keyword id="KW-0963">Cytoplasm</keyword>
<keyword id="KW-0436">Ligase</keyword>
<keyword id="KW-0547">Nucleotide-binding</keyword>
<keyword id="KW-0648">Protein biosynthesis</keyword>
<organism>
    <name type="scientific">Thermotoga sp. (strain RQ2)</name>
    <dbReference type="NCBI Taxonomy" id="126740"/>
    <lineage>
        <taxon>Bacteria</taxon>
        <taxon>Thermotogati</taxon>
        <taxon>Thermotogota</taxon>
        <taxon>Thermotogae</taxon>
        <taxon>Thermotogales</taxon>
        <taxon>Thermotogaceae</taxon>
        <taxon>Thermotoga</taxon>
    </lineage>
</organism>
<accession>B1LAE7</accession>